<organism>
    <name type="scientific">Agrobacterium fabrum (strain C58 / ATCC 33970)</name>
    <name type="common">Agrobacterium tumefaciens (strain C58)</name>
    <dbReference type="NCBI Taxonomy" id="176299"/>
    <lineage>
        <taxon>Bacteria</taxon>
        <taxon>Pseudomonadati</taxon>
        <taxon>Pseudomonadota</taxon>
        <taxon>Alphaproteobacteria</taxon>
        <taxon>Hyphomicrobiales</taxon>
        <taxon>Rhizobiaceae</taxon>
        <taxon>Rhizobium/Agrobacterium group</taxon>
        <taxon>Agrobacterium</taxon>
        <taxon>Agrobacterium tumefaciens complex</taxon>
    </lineage>
</organism>
<gene>
    <name evidence="1" type="primary">dapB</name>
    <name type="ordered locus">Atu0183</name>
    <name type="ORF">AGR_C_307</name>
</gene>
<dbReference type="EC" id="1.17.1.8" evidence="1"/>
<dbReference type="EMBL" id="AE007869">
    <property type="protein sequence ID" value="AAK86003.2"/>
    <property type="molecule type" value="Genomic_DNA"/>
</dbReference>
<dbReference type="PIR" id="B97381">
    <property type="entry name" value="B97381"/>
</dbReference>
<dbReference type="RefSeq" id="NP_353218.2">
    <property type="nucleotide sequence ID" value="NC_003062.2"/>
</dbReference>
<dbReference type="RefSeq" id="WP_006310011.1">
    <property type="nucleotide sequence ID" value="NC_003062.2"/>
</dbReference>
<dbReference type="SMR" id="Q8UIV8"/>
<dbReference type="STRING" id="176299.Atu0183"/>
<dbReference type="EnsemblBacteria" id="AAK86003">
    <property type="protein sequence ID" value="AAK86003"/>
    <property type="gene ID" value="Atu0183"/>
</dbReference>
<dbReference type="GeneID" id="1132221"/>
<dbReference type="KEGG" id="atu:Atu0183"/>
<dbReference type="PATRIC" id="fig|176299.10.peg.174"/>
<dbReference type="eggNOG" id="COG0289">
    <property type="taxonomic scope" value="Bacteria"/>
</dbReference>
<dbReference type="HOGENOM" id="CLU_047479_2_1_5"/>
<dbReference type="OrthoDB" id="9790352at2"/>
<dbReference type="PhylomeDB" id="Q8UIV8"/>
<dbReference type="UniPathway" id="UPA00034">
    <property type="reaction ID" value="UER00018"/>
</dbReference>
<dbReference type="Proteomes" id="UP000000813">
    <property type="component" value="Chromosome circular"/>
</dbReference>
<dbReference type="GO" id="GO:0005737">
    <property type="term" value="C:cytoplasm"/>
    <property type="evidence" value="ECO:0007669"/>
    <property type="project" value="UniProtKB-SubCell"/>
</dbReference>
<dbReference type="GO" id="GO:0008839">
    <property type="term" value="F:4-hydroxy-tetrahydrodipicolinate reductase"/>
    <property type="evidence" value="ECO:0007669"/>
    <property type="project" value="UniProtKB-EC"/>
</dbReference>
<dbReference type="GO" id="GO:0051287">
    <property type="term" value="F:NAD binding"/>
    <property type="evidence" value="ECO:0007669"/>
    <property type="project" value="UniProtKB-UniRule"/>
</dbReference>
<dbReference type="GO" id="GO:0050661">
    <property type="term" value="F:NADP binding"/>
    <property type="evidence" value="ECO:0007669"/>
    <property type="project" value="UniProtKB-UniRule"/>
</dbReference>
<dbReference type="GO" id="GO:0016726">
    <property type="term" value="F:oxidoreductase activity, acting on CH or CH2 groups, NAD or NADP as acceptor"/>
    <property type="evidence" value="ECO:0007669"/>
    <property type="project" value="UniProtKB-UniRule"/>
</dbReference>
<dbReference type="GO" id="GO:0019877">
    <property type="term" value="P:diaminopimelate biosynthetic process"/>
    <property type="evidence" value="ECO:0007669"/>
    <property type="project" value="UniProtKB-UniRule"/>
</dbReference>
<dbReference type="GO" id="GO:0009089">
    <property type="term" value="P:lysine biosynthetic process via diaminopimelate"/>
    <property type="evidence" value="ECO:0007669"/>
    <property type="project" value="UniProtKB-UniRule"/>
</dbReference>
<dbReference type="CDD" id="cd02274">
    <property type="entry name" value="DHDPR_N"/>
    <property type="match status" value="1"/>
</dbReference>
<dbReference type="FunFam" id="3.30.360.10:FF:000004">
    <property type="entry name" value="4-hydroxy-tetrahydrodipicolinate reductase"/>
    <property type="match status" value="1"/>
</dbReference>
<dbReference type="Gene3D" id="3.30.360.10">
    <property type="entry name" value="Dihydrodipicolinate Reductase, domain 2"/>
    <property type="match status" value="1"/>
</dbReference>
<dbReference type="Gene3D" id="3.40.50.720">
    <property type="entry name" value="NAD(P)-binding Rossmann-like Domain"/>
    <property type="match status" value="1"/>
</dbReference>
<dbReference type="HAMAP" id="MF_00102">
    <property type="entry name" value="DapB"/>
    <property type="match status" value="1"/>
</dbReference>
<dbReference type="InterPro" id="IPR022663">
    <property type="entry name" value="DapB_C"/>
</dbReference>
<dbReference type="InterPro" id="IPR000846">
    <property type="entry name" value="DapB_N"/>
</dbReference>
<dbReference type="InterPro" id="IPR022664">
    <property type="entry name" value="DapB_N_CS"/>
</dbReference>
<dbReference type="InterPro" id="IPR023940">
    <property type="entry name" value="DHDPR_bac"/>
</dbReference>
<dbReference type="InterPro" id="IPR036291">
    <property type="entry name" value="NAD(P)-bd_dom_sf"/>
</dbReference>
<dbReference type="NCBIfam" id="TIGR00036">
    <property type="entry name" value="dapB"/>
    <property type="match status" value="1"/>
</dbReference>
<dbReference type="PANTHER" id="PTHR20836:SF0">
    <property type="entry name" value="4-HYDROXY-TETRAHYDRODIPICOLINATE REDUCTASE 1, CHLOROPLASTIC-RELATED"/>
    <property type="match status" value="1"/>
</dbReference>
<dbReference type="PANTHER" id="PTHR20836">
    <property type="entry name" value="DIHYDRODIPICOLINATE REDUCTASE"/>
    <property type="match status" value="1"/>
</dbReference>
<dbReference type="Pfam" id="PF05173">
    <property type="entry name" value="DapB_C"/>
    <property type="match status" value="1"/>
</dbReference>
<dbReference type="Pfam" id="PF01113">
    <property type="entry name" value="DapB_N"/>
    <property type="match status" value="1"/>
</dbReference>
<dbReference type="PIRSF" id="PIRSF000161">
    <property type="entry name" value="DHPR"/>
    <property type="match status" value="1"/>
</dbReference>
<dbReference type="SUPFAM" id="SSF55347">
    <property type="entry name" value="Glyceraldehyde-3-phosphate dehydrogenase-like, C-terminal domain"/>
    <property type="match status" value="1"/>
</dbReference>
<dbReference type="SUPFAM" id="SSF51735">
    <property type="entry name" value="NAD(P)-binding Rossmann-fold domains"/>
    <property type="match status" value="1"/>
</dbReference>
<dbReference type="PROSITE" id="PS01298">
    <property type="entry name" value="DAPB"/>
    <property type="match status" value="1"/>
</dbReference>
<accession>Q8UIV8</accession>
<name>DAPB_AGRFC</name>
<proteinExistence type="inferred from homology"/>
<evidence type="ECO:0000255" key="1">
    <source>
        <dbReference type="HAMAP-Rule" id="MF_00102"/>
    </source>
</evidence>
<evidence type="ECO:0000305" key="2"/>
<sequence>MGSSGMKLVVVGAAGRMGQALIRLIHQTPGVQLHAAVAREGSAFVGRDAGEIAGLGPIGIEITSDPLQAFLHAEGVIDFTSPATSITFAGLAAQARIVHVVGTTGCSPQDEEKFKAASRHARIVKSGNMSLGVNLLSVLTQQAAQALDAQNWDIEILEMHHKHKVDAPSGTALLLGEAAAAGRKVDLTAASVRVRDGHTGAREAGTIGFATLRGGSVIGEHSVIFAGEGERVELSHYAGDRSIFARGAITAAVWAFDKKPGFYSMLDVLGLSQAE</sequence>
<keyword id="KW-0028">Amino-acid biosynthesis</keyword>
<keyword id="KW-0963">Cytoplasm</keyword>
<keyword id="KW-0220">Diaminopimelate biosynthesis</keyword>
<keyword id="KW-0457">Lysine biosynthesis</keyword>
<keyword id="KW-0520">NAD</keyword>
<keyword id="KW-0521">NADP</keyword>
<keyword id="KW-0560">Oxidoreductase</keyword>
<keyword id="KW-1185">Reference proteome</keyword>
<reference key="1">
    <citation type="journal article" date="2001" name="Science">
        <title>The genome of the natural genetic engineer Agrobacterium tumefaciens C58.</title>
        <authorList>
            <person name="Wood D.W."/>
            <person name="Setubal J.C."/>
            <person name="Kaul R."/>
            <person name="Monks D.E."/>
            <person name="Kitajima J.P."/>
            <person name="Okura V.K."/>
            <person name="Zhou Y."/>
            <person name="Chen L."/>
            <person name="Wood G.E."/>
            <person name="Almeida N.F. Jr."/>
            <person name="Woo L."/>
            <person name="Chen Y."/>
            <person name="Paulsen I.T."/>
            <person name="Eisen J.A."/>
            <person name="Karp P.D."/>
            <person name="Bovee D. Sr."/>
            <person name="Chapman P."/>
            <person name="Clendenning J."/>
            <person name="Deatherage G."/>
            <person name="Gillet W."/>
            <person name="Grant C."/>
            <person name="Kutyavin T."/>
            <person name="Levy R."/>
            <person name="Li M.-J."/>
            <person name="McClelland E."/>
            <person name="Palmieri A."/>
            <person name="Raymond C."/>
            <person name="Rouse G."/>
            <person name="Saenphimmachak C."/>
            <person name="Wu Z."/>
            <person name="Romero P."/>
            <person name="Gordon D."/>
            <person name="Zhang S."/>
            <person name="Yoo H."/>
            <person name="Tao Y."/>
            <person name="Biddle P."/>
            <person name="Jung M."/>
            <person name="Krespan W."/>
            <person name="Perry M."/>
            <person name="Gordon-Kamm B."/>
            <person name="Liao L."/>
            <person name="Kim S."/>
            <person name="Hendrick C."/>
            <person name="Zhao Z.-Y."/>
            <person name="Dolan M."/>
            <person name="Chumley F."/>
            <person name="Tingey S.V."/>
            <person name="Tomb J.-F."/>
            <person name="Gordon M.P."/>
            <person name="Olson M.V."/>
            <person name="Nester E.W."/>
        </authorList>
    </citation>
    <scope>NUCLEOTIDE SEQUENCE [LARGE SCALE GENOMIC DNA]</scope>
    <source>
        <strain>C58 / ATCC 33970</strain>
    </source>
</reference>
<reference key="2">
    <citation type="journal article" date="2001" name="Science">
        <title>Genome sequence of the plant pathogen and biotechnology agent Agrobacterium tumefaciens C58.</title>
        <authorList>
            <person name="Goodner B."/>
            <person name="Hinkle G."/>
            <person name="Gattung S."/>
            <person name="Miller N."/>
            <person name="Blanchard M."/>
            <person name="Qurollo B."/>
            <person name="Goldman B.S."/>
            <person name="Cao Y."/>
            <person name="Askenazi M."/>
            <person name="Halling C."/>
            <person name="Mullin L."/>
            <person name="Houmiel K."/>
            <person name="Gordon J."/>
            <person name="Vaudin M."/>
            <person name="Iartchouk O."/>
            <person name="Epp A."/>
            <person name="Liu F."/>
            <person name="Wollam C."/>
            <person name="Allinger M."/>
            <person name="Doughty D."/>
            <person name="Scott C."/>
            <person name="Lappas C."/>
            <person name="Markelz B."/>
            <person name="Flanagan C."/>
            <person name="Crowell C."/>
            <person name="Gurson J."/>
            <person name="Lomo C."/>
            <person name="Sear C."/>
            <person name="Strub G."/>
            <person name="Cielo C."/>
            <person name="Slater S."/>
        </authorList>
    </citation>
    <scope>NUCLEOTIDE SEQUENCE [LARGE SCALE GENOMIC DNA]</scope>
    <source>
        <strain>C58 / ATCC 33970</strain>
    </source>
</reference>
<protein>
    <recommendedName>
        <fullName evidence="1">4-hydroxy-tetrahydrodipicolinate reductase</fullName>
        <shortName evidence="1">HTPA reductase</shortName>
        <ecNumber evidence="1">1.17.1.8</ecNumber>
    </recommendedName>
</protein>
<feature type="chain" id="PRO_0000141405" description="4-hydroxy-tetrahydrodipicolinate reductase">
    <location>
        <begin position="1"/>
        <end position="275"/>
    </location>
</feature>
<feature type="active site" description="Proton donor/acceptor" evidence="1">
    <location>
        <position position="160"/>
    </location>
</feature>
<feature type="active site" description="Proton donor" evidence="1">
    <location>
        <position position="164"/>
    </location>
</feature>
<feature type="binding site" evidence="1">
    <location>
        <begin position="12"/>
        <end position="17"/>
    </location>
    <ligand>
        <name>NAD(+)</name>
        <dbReference type="ChEBI" id="CHEBI:57540"/>
    </ligand>
</feature>
<feature type="binding site" evidence="1">
    <location>
        <position position="39"/>
    </location>
    <ligand>
        <name>NADP(+)</name>
        <dbReference type="ChEBI" id="CHEBI:58349"/>
    </ligand>
</feature>
<feature type="binding site" evidence="1">
    <location>
        <begin position="102"/>
        <end position="104"/>
    </location>
    <ligand>
        <name>NAD(+)</name>
        <dbReference type="ChEBI" id="CHEBI:57540"/>
    </ligand>
</feature>
<feature type="binding site" evidence="1">
    <location>
        <begin position="126"/>
        <end position="129"/>
    </location>
    <ligand>
        <name>NAD(+)</name>
        <dbReference type="ChEBI" id="CHEBI:57540"/>
    </ligand>
</feature>
<feature type="binding site" evidence="1">
    <location>
        <position position="161"/>
    </location>
    <ligand>
        <name>(S)-2,3,4,5-tetrahydrodipicolinate</name>
        <dbReference type="ChEBI" id="CHEBI:16845"/>
    </ligand>
</feature>
<feature type="binding site" evidence="1">
    <location>
        <begin position="170"/>
        <end position="171"/>
    </location>
    <ligand>
        <name>(S)-2,3,4,5-tetrahydrodipicolinate</name>
        <dbReference type="ChEBI" id="CHEBI:16845"/>
    </ligand>
</feature>
<comment type="function">
    <text evidence="1">Catalyzes the conversion of 4-hydroxy-tetrahydrodipicolinate (HTPA) to tetrahydrodipicolinate.</text>
</comment>
<comment type="catalytic activity">
    <reaction evidence="1">
        <text>(S)-2,3,4,5-tetrahydrodipicolinate + NAD(+) + H2O = (2S,4S)-4-hydroxy-2,3,4,5-tetrahydrodipicolinate + NADH + H(+)</text>
        <dbReference type="Rhea" id="RHEA:35323"/>
        <dbReference type="ChEBI" id="CHEBI:15377"/>
        <dbReference type="ChEBI" id="CHEBI:15378"/>
        <dbReference type="ChEBI" id="CHEBI:16845"/>
        <dbReference type="ChEBI" id="CHEBI:57540"/>
        <dbReference type="ChEBI" id="CHEBI:57945"/>
        <dbReference type="ChEBI" id="CHEBI:67139"/>
        <dbReference type="EC" id="1.17.1.8"/>
    </reaction>
</comment>
<comment type="catalytic activity">
    <reaction evidence="1">
        <text>(S)-2,3,4,5-tetrahydrodipicolinate + NADP(+) + H2O = (2S,4S)-4-hydroxy-2,3,4,5-tetrahydrodipicolinate + NADPH + H(+)</text>
        <dbReference type="Rhea" id="RHEA:35331"/>
        <dbReference type="ChEBI" id="CHEBI:15377"/>
        <dbReference type="ChEBI" id="CHEBI:15378"/>
        <dbReference type="ChEBI" id="CHEBI:16845"/>
        <dbReference type="ChEBI" id="CHEBI:57783"/>
        <dbReference type="ChEBI" id="CHEBI:58349"/>
        <dbReference type="ChEBI" id="CHEBI:67139"/>
        <dbReference type="EC" id="1.17.1.8"/>
    </reaction>
</comment>
<comment type="pathway">
    <text evidence="1">Amino-acid biosynthesis; L-lysine biosynthesis via DAP pathway; (S)-tetrahydrodipicolinate from L-aspartate: step 4/4.</text>
</comment>
<comment type="subcellular location">
    <subcellularLocation>
        <location evidence="1">Cytoplasm</location>
    </subcellularLocation>
</comment>
<comment type="similarity">
    <text evidence="1">Belongs to the DapB family.</text>
</comment>
<comment type="caution">
    <text evidence="2">Was originally thought to be a dihydrodipicolinate reductase (DHDPR), catalyzing the conversion of dihydrodipicolinate to tetrahydrodipicolinate. However, it was shown in E.coli that the substrate of the enzymatic reaction is not dihydrodipicolinate (DHDP) but in fact (2S,4S)-4-hydroxy-2,3,4,5-tetrahydrodipicolinic acid (HTPA), the product released by the DapA-catalyzed reaction.</text>
</comment>